<name>QUEF_FRACC</name>
<comment type="function">
    <text evidence="1">Catalyzes the NADPH-dependent reduction of 7-cyano-7-deazaguanine (preQ0) to 7-aminomethyl-7-deazaguanine (preQ1).</text>
</comment>
<comment type="catalytic activity">
    <reaction evidence="1">
        <text>7-aminomethyl-7-carbaguanine + 2 NADP(+) = 7-cyano-7-deazaguanine + 2 NADPH + 3 H(+)</text>
        <dbReference type="Rhea" id="RHEA:13409"/>
        <dbReference type="ChEBI" id="CHEBI:15378"/>
        <dbReference type="ChEBI" id="CHEBI:45075"/>
        <dbReference type="ChEBI" id="CHEBI:57783"/>
        <dbReference type="ChEBI" id="CHEBI:58349"/>
        <dbReference type="ChEBI" id="CHEBI:58703"/>
        <dbReference type="EC" id="1.7.1.13"/>
    </reaction>
</comment>
<comment type="pathway">
    <text evidence="1">tRNA modification; tRNA-queuosine biosynthesis.</text>
</comment>
<comment type="subcellular location">
    <subcellularLocation>
        <location evidence="1">Cytoplasm</location>
    </subcellularLocation>
</comment>
<comment type="similarity">
    <text evidence="1">Belongs to the GTP cyclohydrolase I family. QueF type 1 subfamily.</text>
</comment>
<accession>Q2J7K4</accession>
<keyword id="KW-0963">Cytoplasm</keyword>
<keyword id="KW-0521">NADP</keyword>
<keyword id="KW-0560">Oxidoreductase</keyword>
<keyword id="KW-0671">Queuosine biosynthesis</keyword>
<keyword id="KW-1185">Reference proteome</keyword>
<reference key="1">
    <citation type="journal article" date="2007" name="Genome Res.">
        <title>Genome characteristics of facultatively symbiotic Frankia sp. strains reflect host range and host plant biogeography.</title>
        <authorList>
            <person name="Normand P."/>
            <person name="Lapierre P."/>
            <person name="Tisa L.S."/>
            <person name="Gogarten J.P."/>
            <person name="Alloisio N."/>
            <person name="Bagnarol E."/>
            <person name="Bassi C.A."/>
            <person name="Berry A.M."/>
            <person name="Bickhart D.M."/>
            <person name="Choisne N."/>
            <person name="Couloux A."/>
            <person name="Cournoyer B."/>
            <person name="Cruveiller S."/>
            <person name="Daubin V."/>
            <person name="Demange N."/>
            <person name="Francino M.P."/>
            <person name="Goltsman E."/>
            <person name="Huang Y."/>
            <person name="Kopp O.R."/>
            <person name="Labarre L."/>
            <person name="Lapidus A."/>
            <person name="Lavire C."/>
            <person name="Marechal J."/>
            <person name="Martinez M."/>
            <person name="Mastronunzio J.E."/>
            <person name="Mullin B.C."/>
            <person name="Niemann J."/>
            <person name="Pujic P."/>
            <person name="Rawnsley T."/>
            <person name="Rouy Z."/>
            <person name="Schenowitz C."/>
            <person name="Sellstedt A."/>
            <person name="Tavares F."/>
            <person name="Tomkins J.P."/>
            <person name="Vallenet D."/>
            <person name="Valverde C."/>
            <person name="Wall L.G."/>
            <person name="Wang Y."/>
            <person name="Medigue C."/>
            <person name="Benson D.R."/>
        </authorList>
    </citation>
    <scope>NUCLEOTIDE SEQUENCE [LARGE SCALE GENOMIC DNA]</scope>
    <source>
        <strain>DSM 45818 / CECT 9043 / HFP020203 / CcI3</strain>
    </source>
</reference>
<sequence length="125" mass="13968">MALTKLGNPEAKADRSLETFPIDDTSQEIRIDCREFTCRCPITGQPDWATIRIDYRPGGRGLETKSLKLYLETFREEGIFHEHLATLIRDDLVAALAPVQLTVTVNFNARGGIALAASSTYRREA</sequence>
<protein>
    <recommendedName>
        <fullName evidence="1">NADPH-dependent 7-cyano-7-deazaguanine reductase</fullName>
        <ecNumber evidence="1">1.7.1.13</ecNumber>
    </recommendedName>
    <alternativeName>
        <fullName evidence="1">7-cyano-7-carbaguanine reductase</fullName>
    </alternativeName>
    <alternativeName>
        <fullName evidence="1">NADPH-dependent nitrile oxidoreductase</fullName>
    </alternativeName>
    <alternativeName>
        <fullName evidence="1">PreQ(0) reductase</fullName>
    </alternativeName>
</protein>
<gene>
    <name evidence="1" type="primary">queF</name>
    <name type="ordered locus">Francci3_3383</name>
</gene>
<evidence type="ECO:0000255" key="1">
    <source>
        <dbReference type="HAMAP-Rule" id="MF_00818"/>
    </source>
</evidence>
<proteinExistence type="inferred from homology"/>
<dbReference type="EC" id="1.7.1.13" evidence="1"/>
<dbReference type="EMBL" id="CP000249">
    <property type="protein sequence ID" value="ABD12738.1"/>
    <property type="molecule type" value="Genomic_DNA"/>
</dbReference>
<dbReference type="SMR" id="Q2J7K4"/>
<dbReference type="STRING" id="106370.Francci3_3383"/>
<dbReference type="KEGG" id="fra:Francci3_3383"/>
<dbReference type="eggNOG" id="COG0780">
    <property type="taxonomic scope" value="Bacteria"/>
</dbReference>
<dbReference type="HOGENOM" id="CLU_102489_1_0_11"/>
<dbReference type="PhylomeDB" id="Q2J7K4"/>
<dbReference type="UniPathway" id="UPA00392"/>
<dbReference type="Proteomes" id="UP000001937">
    <property type="component" value="Chromosome"/>
</dbReference>
<dbReference type="GO" id="GO:0005737">
    <property type="term" value="C:cytoplasm"/>
    <property type="evidence" value="ECO:0007669"/>
    <property type="project" value="UniProtKB-SubCell"/>
</dbReference>
<dbReference type="GO" id="GO:0033739">
    <property type="term" value="F:preQ1 synthase activity"/>
    <property type="evidence" value="ECO:0007669"/>
    <property type="project" value="UniProtKB-UniRule"/>
</dbReference>
<dbReference type="GO" id="GO:0008616">
    <property type="term" value="P:queuosine biosynthetic process"/>
    <property type="evidence" value="ECO:0007669"/>
    <property type="project" value="UniProtKB-UniRule"/>
</dbReference>
<dbReference type="GO" id="GO:0006400">
    <property type="term" value="P:tRNA modification"/>
    <property type="evidence" value="ECO:0007669"/>
    <property type="project" value="UniProtKB-UniRule"/>
</dbReference>
<dbReference type="Gene3D" id="3.30.1130.10">
    <property type="match status" value="1"/>
</dbReference>
<dbReference type="HAMAP" id="MF_00818">
    <property type="entry name" value="QueF_type1"/>
    <property type="match status" value="1"/>
</dbReference>
<dbReference type="InterPro" id="IPR043133">
    <property type="entry name" value="GTP-CH-I_C/QueF"/>
</dbReference>
<dbReference type="InterPro" id="IPR050084">
    <property type="entry name" value="NADPH_dep_7-cyano-7-deazaG_red"/>
</dbReference>
<dbReference type="InterPro" id="IPR029500">
    <property type="entry name" value="QueF"/>
</dbReference>
<dbReference type="InterPro" id="IPR016856">
    <property type="entry name" value="QueF_type1"/>
</dbReference>
<dbReference type="NCBIfam" id="TIGR03139">
    <property type="entry name" value="QueF-II"/>
    <property type="match status" value="1"/>
</dbReference>
<dbReference type="PANTHER" id="PTHR34354">
    <property type="entry name" value="NADPH-DEPENDENT 7-CYANO-7-DEAZAGUANINE REDUCTASE"/>
    <property type="match status" value="1"/>
</dbReference>
<dbReference type="PANTHER" id="PTHR34354:SF1">
    <property type="entry name" value="NADPH-DEPENDENT 7-CYANO-7-DEAZAGUANINE REDUCTASE"/>
    <property type="match status" value="1"/>
</dbReference>
<dbReference type="Pfam" id="PF14489">
    <property type="entry name" value="QueF"/>
    <property type="match status" value="1"/>
</dbReference>
<dbReference type="PIRSF" id="PIRSF027377">
    <property type="entry name" value="Nitrile_oxidored_QueF"/>
    <property type="match status" value="1"/>
</dbReference>
<dbReference type="SUPFAM" id="SSF55620">
    <property type="entry name" value="Tetrahydrobiopterin biosynthesis enzymes-like"/>
    <property type="match status" value="1"/>
</dbReference>
<organism>
    <name type="scientific">Frankia casuarinae (strain DSM 45818 / CECT 9043 / HFP020203 / CcI3)</name>
    <dbReference type="NCBI Taxonomy" id="106370"/>
    <lineage>
        <taxon>Bacteria</taxon>
        <taxon>Bacillati</taxon>
        <taxon>Actinomycetota</taxon>
        <taxon>Actinomycetes</taxon>
        <taxon>Frankiales</taxon>
        <taxon>Frankiaceae</taxon>
        <taxon>Frankia</taxon>
    </lineage>
</organism>
<feature type="chain" id="PRO_0000247681" description="NADPH-dependent 7-cyano-7-deazaguanine reductase">
    <location>
        <begin position="1"/>
        <end position="125"/>
    </location>
</feature>
<feature type="active site" description="Thioimide intermediate" evidence="1">
    <location>
        <position position="40"/>
    </location>
</feature>
<feature type="active site" description="Proton donor" evidence="1">
    <location>
        <position position="47"/>
    </location>
</feature>
<feature type="binding site" evidence="1">
    <location>
        <begin position="62"/>
        <end position="64"/>
    </location>
    <ligand>
        <name>substrate</name>
    </ligand>
</feature>
<feature type="binding site" evidence="1">
    <location>
        <begin position="81"/>
        <end position="82"/>
    </location>
    <ligand>
        <name>substrate</name>
    </ligand>
</feature>